<gene>
    <name evidence="1" type="primary">lexA</name>
    <name type="synonym">dinR</name>
    <name type="ordered locus">SAR1349</name>
</gene>
<protein>
    <recommendedName>
        <fullName evidence="1">LexA repressor</fullName>
        <ecNumber evidence="1">3.4.21.88</ecNumber>
    </recommendedName>
</protein>
<sequence length="207" mass="23301">MRELTKRQSEIYNYIKQVVQTKGYPPSVREIGEAVGLASSSTVHGHLSRLEEKGYIRRDPTKPRAIEIVSDQTNDNINMEETIHVPVIGKVTAGVPITAVENIEEYFPLPEHLTSTHNSDIFILNVVGDSMIEAGILDGDKVIVRSQTIAENGDIIVAMTEEDEATVKRFYKEKNRYRLQPENSTMEPIYLDNVAVIGKVIGLYREM</sequence>
<dbReference type="EC" id="3.4.21.88" evidence="1"/>
<dbReference type="EMBL" id="BX571856">
    <property type="protein sequence ID" value="CAG40348.1"/>
    <property type="molecule type" value="Genomic_DNA"/>
</dbReference>
<dbReference type="RefSeq" id="WP_001208760.1">
    <property type="nucleotide sequence ID" value="NC_002952.2"/>
</dbReference>
<dbReference type="SMR" id="Q6GH67"/>
<dbReference type="KEGG" id="sar:SAR1349"/>
<dbReference type="HOGENOM" id="CLU_066192_45_1_9"/>
<dbReference type="Proteomes" id="UP000000596">
    <property type="component" value="Chromosome"/>
</dbReference>
<dbReference type="GO" id="GO:0003677">
    <property type="term" value="F:DNA binding"/>
    <property type="evidence" value="ECO:0007669"/>
    <property type="project" value="UniProtKB-UniRule"/>
</dbReference>
<dbReference type="GO" id="GO:0004252">
    <property type="term" value="F:serine-type endopeptidase activity"/>
    <property type="evidence" value="ECO:0007669"/>
    <property type="project" value="UniProtKB-UniRule"/>
</dbReference>
<dbReference type="GO" id="GO:0006281">
    <property type="term" value="P:DNA repair"/>
    <property type="evidence" value="ECO:0007669"/>
    <property type="project" value="UniProtKB-UniRule"/>
</dbReference>
<dbReference type="GO" id="GO:0006260">
    <property type="term" value="P:DNA replication"/>
    <property type="evidence" value="ECO:0007669"/>
    <property type="project" value="UniProtKB-UniRule"/>
</dbReference>
<dbReference type="GO" id="GO:0045892">
    <property type="term" value="P:negative regulation of DNA-templated transcription"/>
    <property type="evidence" value="ECO:0007669"/>
    <property type="project" value="UniProtKB-UniRule"/>
</dbReference>
<dbReference type="GO" id="GO:0006508">
    <property type="term" value="P:proteolysis"/>
    <property type="evidence" value="ECO:0007669"/>
    <property type="project" value="InterPro"/>
</dbReference>
<dbReference type="GO" id="GO:0009432">
    <property type="term" value="P:SOS response"/>
    <property type="evidence" value="ECO:0007669"/>
    <property type="project" value="UniProtKB-UniRule"/>
</dbReference>
<dbReference type="CDD" id="cd00090">
    <property type="entry name" value="HTH_ARSR"/>
    <property type="match status" value="1"/>
</dbReference>
<dbReference type="CDD" id="cd06529">
    <property type="entry name" value="S24_LexA-like"/>
    <property type="match status" value="1"/>
</dbReference>
<dbReference type="FunFam" id="1.10.10.10:FF:000009">
    <property type="entry name" value="LexA repressor"/>
    <property type="match status" value="1"/>
</dbReference>
<dbReference type="FunFam" id="2.10.109.10:FF:000001">
    <property type="entry name" value="LexA repressor"/>
    <property type="match status" value="1"/>
</dbReference>
<dbReference type="Gene3D" id="2.10.109.10">
    <property type="entry name" value="Umud Fragment, subunit A"/>
    <property type="match status" value="1"/>
</dbReference>
<dbReference type="Gene3D" id="1.10.10.10">
    <property type="entry name" value="Winged helix-like DNA-binding domain superfamily/Winged helix DNA-binding domain"/>
    <property type="match status" value="1"/>
</dbReference>
<dbReference type="HAMAP" id="MF_00015">
    <property type="entry name" value="LexA"/>
    <property type="match status" value="1"/>
</dbReference>
<dbReference type="InterPro" id="IPR011991">
    <property type="entry name" value="ArsR-like_HTH"/>
</dbReference>
<dbReference type="InterPro" id="IPR006200">
    <property type="entry name" value="LexA"/>
</dbReference>
<dbReference type="InterPro" id="IPR039418">
    <property type="entry name" value="LexA-like"/>
</dbReference>
<dbReference type="InterPro" id="IPR036286">
    <property type="entry name" value="LexA/Signal_pep-like_sf"/>
</dbReference>
<dbReference type="InterPro" id="IPR006199">
    <property type="entry name" value="LexA_DNA-bd_dom"/>
</dbReference>
<dbReference type="InterPro" id="IPR050077">
    <property type="entry name" value="LexA_repressor"/>
</dbReference>
<dbReference type="InterPro" id="IPR006197">
    <property type="entry name" value="Peptidase_S24_LexA"/>
</dbReference>
<dbReference type="InterPro" id="IPR015927">
    <property type="entry name" value="Peptidase_S24_S26A/B/C"/>
</dbReference>
<dbReference type="InterPro" id="IPR036388">
    <property type="entry name" value="WH-like_DNA-bd_sf"/>
</dbReference>
<dbReference type="InterPro" id="IPR036390">
    <property type="entry name" value="WH_DNA-bd_sf"/>
</dbReference>
<dbReference type="NCBIfam" id="TIGR00498">
    <property type="entry name" value="lexA"/>
    <property type="match status" value="1"/>
</dbReference>
<dbReference type="PANTHER" id="PTHR33516">
    <property type="entry name" value="LEXA REPRESSOR"/>
    <property type="match status" value="1"/>
</dbReference>
<dbReference type="PANTHER" id="PTHR33516:SF2">
    <property type="entry name" value="LEXA REPRESSOR-RELATED"/>
    <property type="match status" value="1"/>
</dbReference>
<dbReference type="Pfam" id="PF01726">
    <property type="entry name" value="LexA_DNA_bind"/>
    <property type="match status" value="1"/>
</dbReference>
<dbReference type="Pfam" id="PF00717">
    <property type="entry name" value="Peptidase_S24"/>
    <property type="match status" value="1"/>
</dbReference>
<dbReference type="PRINTS" id="PR00726">
    <property type="entry name" value="LEXASERPTASE"/>
</dbReference>
<dbReference type="SUPFAM" id="SSF51306">
    <property type="entry name" value="LexA/Signal peptidase"/>
    <property type="match status" value="1"/>
</dbReference>
<dbReference type="SUPFAM" id="SSF46785">
    <property type="entry name" value="Winged helix' DNA-binding domain"/>
    <property type="match status" value="1"/>
</dbReference>
<proteinExistence type="inferred from homology"/>
<comment type="function">
    <text evidence="1">Represses a number of genes involved in the response to DNA damage (SOS response), including recA and lexA. In the presence of single-stranded DNA, RecA interacts with LexA causing an autocatalytic cleavage which disrupts the DNA-binding part of LexA, leading to derepression of the SOS regulon and eventually DNA repair.</text>
</comment>
<comment type="catalytic activity">
    <reaction evidence="1">
        <text>Hydrolysis of Ala-|-Gly bond in repressor LexA.</text>
        <dbReference type="EC" id="3.4.21.88"/>
    </reaction>
</comment>
<comment type="subunit">
    <text evidence="1">Homodimer.</text>
</comment>
<comment type="similarity">
    <text evidence="1">Belongs to the peptidase S24 family.</text>
</comment>
<keyword id="KW-0068">Autocatalytic cleavage</keyword>
<keyword id="KW-0227">DNA damage</keyword>
<keyword id="KW-0234">DNA repair</keyword>
<keyword id="KW-0235">DNA replication</keyword>
<keyword id="KW-0238">DNA-binding</keyword>
<keyword id="KW-0378">Hydrolase</keyword>
<keyword id="KW-0678">Repressor</keyword>
<keyword id="KW-0742">SOS response</keyword>
<keyword id="KW-0804">Transcription</keyword>
<keyword id="KW-0805">Transcription regulation</keyword>
<name>LEXA_STAAR</name>
<feature type="chain" id="PRO_0000170090" description="LexA repressor">
    <location>
        <begin position="1"/>
        <end position="207"/>
    </location>
</feature>
<feature type="DNA-binding region" description="H-T-H motif" evidence="1">
    <location>
        <begin position="28"/>
        <end position="48"/>
    </location>
</feature>
<feature type="active site" description="For autocatalytic cleavage activity" evidence="1">
    <location>
        <position position="130"/>
    </location>
</feature>
<feature type="active site" description="For autocatalytic cleavage activity" evidence="1">
    <location>
        <position position="168"/>
    </location>
</feature>
<feature type="site" description="Cleavage; by autolysis" evidence="1">
    <location>
        <begin position="93"/>
        <end position="94"/>
    </location>
</feature>
<reference key="1">
    <citation type="journal article" date="2004" name="Proc. Natl. Acad. Sci. U.S.A.">
        <title>Complete genomes of two clinical Staphylococcus aureus strains: evidence for the rapid evolution of virulence and drug resistance.</title>
        <authorList>
            <person name="Holden M.T.G."/>
            <person name="Feil E.J."/>
            <person name="Lindsay J.A."/>
            <person name="Peacock S.J."/>
            <person name="Day N.P.J."/>
            <person name="Enright M.C."/>
            <person name="Foster T.J."/>
            <person name="Moore C.E."/>
            <person name="Hurst L."/>
            <person name="Atkin R."/>
            <person name="Barron A."/>
            <person name="Bason N."/>
            <person name="Bentley S.D."/>
            <person name="Chillingworth C."/>
            <person name="Chillingworth T."/>
            <person name="Churcher C."/>
            <person name="Clark L."/>
            <person name="Corton C."/>
            <person name="Cronin A."/>
            <person name="Doggett J."/>
            <person name="Dowd L."/>
            <person name="Feltwell T."/>
            <person name="Hance Z."/>
            <person name="Harris B."/>
            <person name="Hauser H."/>
            <person name="Holroyd S."/>
            <person name="Jagels K."/>
            <person name="James K.D."/>
            <person name="Lennard N."/>
            <person name="Line A."/>
            <person name="Mayes R."/>
            <person name="Moule S."/>
            <person name="Mungall K."/>
            <person name="Ormond D."/>
            <person name="Quail M.A."/>
            <person name="Rabbinowitsch E."/>
            <person name="Rutherford K.M."/>
            <person name="Sanders M."/>
            <person name="Sharp S."/>
            <person name="Simmonds M."/>
            <person name="Stevens K."/>
            <person name="Whitehead S."/>
            <person name="Barrell B.G."/>
            <person name="Spratt B.G."/>
            <person name="Parkhill J."/>
        </authorList>
    </citation>
    <scope>NUCLEOTIDE SEQUENCE [LARGE SCALE GENOMIC DNA]</scope>
    <source>
        <strain>MRSA252</strain>
    </source>
</reference>
<evidence type="ECO:0000255" key="1">
    <source>
        <dbReference type="HAMAP-Rule" id="MF_00015"/>
    </source>
</evidence>
<organism>
    <name type="scientific">Staphylococcus aureus (strain MRSA252)</name>
    <dbReference type="NCBI Taxonomy" id="282458"/>
    <lineage>
        <taxon>Bacteria</taxon>
        <taxon>Bacillati</taxon>
        <taxon>Bacillota</taxon>
        <taxon>Bacilli</taxon>
        <taxon>Bacillales</taxon>
        <taxon>Staphylococcaceae</taxon>
        <taxon>Staphylococcus</taxon>
    </lineage>
</organism>
<accession>Q6GH67</accession>